<comment type="function">
    <text evidence="1">One of the early assembly proteins it binds 23S rRNA. One of the proteins that surrounds the polypeptide exit tunnel on the outside of the ribosome. Forms the main docking site for trigger factor binding to the ribosome.</text>
</comment>
<comment type="subunit">
    <text evidence="1">Part of the 50S ribosomal subunit. Contacts protein L29, and trigger factor when it is bound to the ribosome.</text>
</comment>
<comment type="similarity">
    <text evidence="1">Belongs to the universal ribosomal protein uL23 family.</text>
</comment>
<gene>
    <name evidence="1" type="primary">rplW</name>
    <name type="ordered locus">Bmul_0251</name>
    <name type="ordered locus">BMULJ_03003</name>
</gene>
<evidence type="ECO:0000255" key="1">
    <source>
        <dbReference type="HAMAP-Rule" id="MF_01369"/>
    </source>
</evidence>
<evidence type="ECO:0000305" key="2"/>
<keyword id="KW-1185">Reference proteome</keyword>
<keyword id="KW-0687">Ribonucleoprotein</keyword>
<keyword id="KW-0689">Ribosomal protein</keyword>
<keyword id="KW-0694">RNA-binding</keyword>
<keyword id="KW-0699">rRNA-binding</keyword>
<proteinExistence type="inferred from homology"/>
<protein>
    <recommendedName>
        <fullName evidence="1">Large ribosomal subunit protein uL23</fullName>
    </recommendedName>
    <alternativeName>
        <fullName evidence="2">50S ribosomal protein L23</fullName>
    </alternativeName>
</protein>
<accession>A9ADJ5</accession>
<name>RL23_BURM1</name>
<dbReference type="EMBL" id="CP000868">
    <property type="protein sequence ID" value="ABX13946.1"/>
    <property type="molecule type" value="Genomic_DNA"/>
</dbReference>
<dbReference type="EMBL" id="AP009385">
    <property type="protein sequence ID" value="BAG44888.1"/>
    <property type="molecule type" value="Genomic_DNA"/>
</dbReference>
<dbReference type="RefSeq" id="WP_004199275.1">
    <property type="nucleotide sequence ID" value="NC_010804.1"/>
</dbReference>
<dbReference type="SMR" id="A9ADJ5"/>
<dbReference type="STRING" id="395019.BMULJ_03003"/>
<dbReference type="GeneID" id="98107158"/>
<dbReference type="KEGG" id="bmj:BMULJ_03003"/>
<dbReference type="KEGG" id="bmu:Bmul_0251"/>
<dbReference type="eggNOG" id="COG0089">
    <property type="taxonomic scope" value="Bacteria"/>
</dbReference>
<dbReference type="HOGENOM" id="CLU_037562_3_1_4"/>
<dbReference type="Proteomes" id="UP000008815">
    <property type="component" value="Chromosome 1"/>
</dbReference>
<dbReference type="GO" id="GO:1990904">
    <property type="term" value="C:ribonucleoprotein complex"/>
    <property type="evidence" value="ECO:0007669"/>
    <property type="project" value="UniProtKB-KW"/>
</dbReference>
<dbReference type="GO" id="GO:0005840">
    <property type="term" value="C:ribosome"/>
    <property type="evidence" value="ECO:0007669"/>
    <property type="project" value="UniProtKB-KW"/>
</dbReference>
<dbReference type="GO" id="GO:0019843">
    <property type="term" value="F:rRNA binding"/>
    <property type="evidence" value="ECO:0007669"/>
    <property type="project" value="UniProtKB-UniRule"/>
</dbReference>
<dbReference type="GO" id="GO:0003735">
    <property type="term" value="F:structural constituent of ribosome"/>
    <property type="evidence" value="ECO:0007669"/>
    <property type="project" value="InterPro"/>
</dbReference>
<dbReference type="GO" id="GO:0006412">
    <property type="term" value="P:translation"/>
    <property type="evidence" value="ECO:0007669"/>
    <property type="project" value="UniProtKB-UniRule"/>
</dbReference>
<dbReference type="FunFam" id="3.30.70.330:FF:000001">
    <property type="entry name" value="50S ribosomal protein L23"/>
    <property type="match status" value="1"/>
</dbReference>
<dbReference type="Gene3D" id="3.30.70.330">
    <property type="match status" value="1"/>
</dbReference>
<dbReference type="HAMAP" id="MF_01369_B">
    <property type="entry name" value="Ribosomal_uL23_B"/>
    <property type="match status" value="1"/>
</dbReference>
<dbReference type="InterPro" id="IPR012677">
    <property type="entry name" value="Nucleotide-bd_a/b_plait_sf"/>
</dbReference>
<dbReference type="InterPro" id="IPR013025">
    <property type="entry name" value="Ribosomal_uL23-like"/>
</dbReference>
<dbReference type="InterPro" id="IPR012678">
    <property type="entry name" value="Ribosomal_uL23/eL15/eS24_sf"/>
</dbReference>
<dbReference type="NCBIfam" id="NF004359">
    <property type="entry name" value="PRK05738.1-3"/>
    <property type="match status" value="1"/>
</dbReference>
<dbReference type="NCBIfam" id="NF004363">
    <property type="entry name" value="PRK05738.2-4"/>
    <property type="match status" value="1"/>
</dbReference>
<dbReference type="PANTHER" id="PTHR11620">
    <property type="entry name" value="60S RIBOSOMAL PROTEIN L23A"/>
    <property type="match status" value="1"/>
</dbReference>
<dbReference type="Pfam" id="PF00276">
    <property type="entry name" value="Ribosomal_L23"/>
    <property type="match status" value="1"/>
</dbReference>
<dbReference type="SUPFAM" id="SSF54189">
    <property type="entry name" value="Ribosomal proteins S24e, L23 and L15e"/>
    <property type="match status" value="1"/>
</dbReference>
<sequence length="104" mass="11740">MSEIRKNDHRLMQVLLAPVISEKATLVADKNEQVVFEVAPDATKQEVKAAVELLFKVEVDSVNVLVQKGKQKRFGRSMGRRKDVKKAYVCLKPGQEINFEAEAK</sequence>
<reference key="1">
    <citation type="submission" date="2007-10" db="EMBL/GenBank/DDBJ databases">
        <title>Complete sequence of chromosome 1 of Burkholderia multivorans ATCC 17616.</title>
        <authorList>
            <person name="Copeland A."/>
            <person name="Lucas S."/>
            <person name="Lapidus A."/>
            <person name="Barry K."/>
            <person name="Glavina del Rio T."/>
            <person name="Dalin E."/>
            <person name="Tice H."/>
            <person name="Pitluck S."/>
            <person name="Chain P."/>
            <person name="Malfatti S."/>
            <person name="Shin M."/>
            <person name="Vergez L."/>
            <person name="Schmutz J."/>
            <person name="Larimer F."/>
            <person name="Land M."/>
            <person name="Hauser L."/>
            <person name="Kyrpides N."/>
            <person name="Kim E."/>
            <person name="Tiedje J."/>
            <person name="Richardson P."/>
        </authorList>
    </citation>
    <scope>NUCLEOTIDE SEQUENCE [LARGE SCALE GENOMIC DNA]</scope>
    <source>
        <strain>ATCC 17616 / 249</strain>
    </source>
</reference>
<reference key="2">
    <citation type="submission" date="2007-04" db="EMBL/GenBank/DDBJ databases">
        <title>Complete genome sequence of Burkholderia multivorans ATCC 17616.</title>
        <authorList>
            <person name="Ohtsubo Y."/>
            <person name="Yamashita A."/>
            <person name="Kurokawa K."/>
            <person name="Takami H."/>
            <person name="Yuhara S."/>
            <person name="Nishiyama E."/>
            <person name="Endo R."/>
            <person name="Miyazaki R."/>
            <person name="Ono A."/>
            <person name="Yano K."/>
            <person name="Ito M."/>
            <person name="Sota M."/>
            <person name="Yuji N."/>
            <person name="Hattori M."/>
            <person name="Tsuda M."/>
        </authorList>
    </citation>
    <scope>NUCLEOTIDE SEQUENCE [LARGE SCALE GENOMIC DNA]</scope>
    <source>
        <strain>ATCC 17616 / 249</strain>
    </source>
</reference>
<organism>
    <name type="scientific">Burkholderia multivorans (strain ATCC 17616 / 249)</name>
    <dbReference type="NCBI Taxonomy" id="395019"/>
    <lineage>
        <taxon>Bacteria</taxon>
        <taxon>Pseudomonadati</taxon>
        <taxon>Pseudomonadota</taxon>
        <taxon>Betaproteobacteria</taxon>
        <taxon>Burkholderiales</taxon>
        <taxon>Burkholderiaceae</taxon>
        <taxon>Burkholderia</taxon>
        <taxon>Burkholderia cepacia complex</taxon>
    </lineage>
</organism>
<feature type="chain" id="PRO_1000144541" description="Large ribosomal subunit protein uL23">
    <location>
        <begin position="1"/>
        <end position="104"/>
    </location>
</feature>